<comment type="function">
    <text evidence="1">Via its association with the multisubunit axonemal dynein complex, is potentially involved in the regulation of cilia function. May also act as a cell cycle regulator.</text>
</comment>
<comment type="subunit">
    <text evidence="1">Part of the multisubunit axonemal dynein complex formed at least of two heavy chains and a number of intermediate and light chains. Interacts with tubulin. Associates with microtubule.</text>
</comment>
<comment type="interaction">
    <interactant intactId="EBI-5235378">
        <id>Q6TDU7</id>
    </interactant>
    <interactant intactId="EBI-11096309">
        <id>Q9NYB9-2</id>
        <label>ABI2</label>
    </interactant>
    <organismsDiffer>false</organismsDiffer>
    <experiments>3</experiments>
</comment>
<comment type="interaction">
    <interactant intactId="EBI-5235378">
        <id>Q6TDU7</id>
    </interactant>
    <interactant intactId="EBI-744782">
        <id>Q9Y5B8</id>
        <label>NME7</label>
    </interactant>
    <organismsDiffer>false</organismsDiffer>
    <experiments>3</experiments>
</comment>
<comment type="subcellular location">
    <subcellularLocation>
        <location evidence="1">Cell projection</location>
        <location evidence="1">Cilium</location>
    </subcellularLocation>
    <subcellularLocation>
        <location evidence="1">Cytoplasm</location>
    </subcellularLocation>
    <text evidence="1">Colocalizes with microtubules in interphase.</text>
</comment>
<comment type="alternative products">
    <event type="alternative splicing"/>
    <isoform>
        <id>Q6TDU7-1</id>
        <name>1</name>
        <sequence type="displayed"/>
    </isoform>
    <isoform>
        <id>Q6TDU7-2</id>
        <name>2</name>
        <sequence type="described" ref="VSP_033380"/>
    </isoform>
    <isoform>
        <id>Q6TDU7-3</id>
        <name>3</name>
        <sequence type="described" ref="VSP_033381 VSP_033382 VSP_033383"/>
    </isoform>
    <isoform>
        <id>Q6TDU7-4</id>
        <name>4</name>
        <sequence type="described" ref="VSP_046917"/>
    </isoform>
</comment>
<comment type="PTM">
    <text evidence="1">Ubiquitinated. Ubiquitination leads to its degradation through the 26S proteasome. Ubiquitin-proteasome-mediated DNAI7 degradation occurs in mitosis.</text>
</comment>
<comment type="similarity">
    <text evidence="9">Belongs to the DNAI7 family.</text>
</comment>
<comment type="sequence caution" evidence="9">
    <conflict type="erroneous initiation">
        <sequence resource="EMBL-CDS" id="BAA91908"/>
    </conflict>
    <text>Truncated N-terminus.</text>
</comment>
<comment type="sequence caution" evidence="9">
    <conflict type="frameshift">
        <sequence resource="EMBL-CDS" id="BAA91908"/>
    </conflict>
</comment>
<organism>
    <name type="scientific">Homo sapiens</name>
    <name type="common">Human</name>
    <dbReference type="NCBI Taxonomy" id="9606"/>
    <lineage>
        <taxon>Eukaryota</taxon>
        <taxon>Metazoa</taxon>
        <taxon>Chordata</taxon>
        <taxon>Craniata</taxon>
        <taxon>Vertebrata</taxon>
        <taxon>Euteleostomi</taxon>
        <taxon>Mammalia</taxon>
        <taxon>Eutheria</taxon>
        <taxon>Euarchontoglires</taxon>
        <taxon>Primates</taxon>
        <taxon>Haplorrhini</taxon>
        <taxon>Catarrhini</taxon>
        <taxon>Hominidae</taxon>
        <taxon>Homo</taxon>
    </lineage>
</organism>
<name>DNAI7_HUMAN</name>
<evidence type="ECO:0000250" key="1">
    <source>
        <dbReference type="UniProtKB" id="Q6TDU8"/>
    </source>
</evidence>
<evidence type="ECO:0000269" key="2">
    <source>
    </source>
</evidence>
<evidence type="ECO:0000269" key="3">
    <source>
    </source>
</evidence>
<evidence type="ECO:0000269" key="4">
    <source>
    </source>
</evidence>
<evidence type="ECO:0000269" key="5">
    <source>
    </source>
</evidence>
<evidence type="ECO:0000269" key="6">
    <source ref="4"/>
</evidence>
<evidence type="ECO:0000303" key="7">
    <source>
    </source>
</evidence>
<evidence type="ECO:0000303" key="8">
    <source>
    </source>
</evidence>
<evidence type="ECO:0000305" key="9"/>
<evidence type="ECO:0000312" key="10">
    <source>
        <dbReference type="HGNC" id="HGNC:29599"/>
    </source>
</evidence>
<proteinExistence type="evidence at protein level"/>
<feature type="chain" id="PRO_0000332731" description="Dynein axonemal intermediate chain 7">
    <location>
        <begin position="1"/>
        <end position="716"/>
    </location>
</feature>
<feature type="splice variant" id="VSP_046917" description="In isoform 4." evidence="7">
    <original>MSGSKKKKVTKAERLKLLQEEEERRLKEEEEARLKYEKEEMERLEIQRIEKEKWHRLEAK</original>
    <variation>M</variation>
    <location>
        <begin position="1"/>
        <end position="60"/>
    </location>
</feature>
<feature type="splice variant" id="VSP_033380" description="In isoform 2." evidence="8">
    <location>
        <begin position="1"/>
        <end position="40"/>
    </location>
</feature>
<feature type="splice variant" id="VSP_033381" description="In isoform 3." evidence="8">
    <original>M</original>
    <variation>MRQTGGGATTDSASPVLNNVIKSQSYFTAKRVGLGNNSYLGVGRPSSQQWLSLPGPGGQGPKAKK</variation>
    <location>
        <position position="1"/>
    </location>
</feature>
<feature type="splice variant" id="VSP_033382" description="In isoform 3." evidence="8">
    <original>V</original>
    <variation>W</variation>
    <location>
        <position position="626"/>
    </location>
</feature>
<feature type="splice variant" id="VSP_033383" description="In isoform 3." evidence="8">
    <location>
        <begin position="627"/>
        <end position="716"/>
    </location>
</feature>
<feature type="sequence variant" id="VAR_043008" description="In dbSNP:rs10842496." evidence="5">
    <original>R</original>
    <variation>S</variation>
    <location>
        <position position="33"/>
    </location>
</feature>
<feature type="sequence variant" id="VAR_062232" description="In dbSNP:rs859146." evidence="2 3 4 6">
    <original>A</original>
    <variation>E</variation>
    <location>
        <position position="633"/>
    </location>
</feature>
<keyword id="KW-0002">3D-structure</keyword>
<keyword id="KW-0025">Alternative splicing</keyword>
<keyword id="KW-0966">Cell projection</keyword>
<keyword id="KW-0963">Cytoplasm</keyword>
<keyword id="KW-1267">Proteomics identification</keyword>
<keyword id="KW-1185">Reference proteome</keyword>
<keyword id="KW-0832">Ubl conjugation</keyword>
<dbReference type="EMBL" id="AY423543">
    <property type="protein sequence ID" value="AAQ93499.1"/>
    <property type="molecule type" value="mRNA"/>
</dbReference>
<dbReference type="EMBL" id="AK001783">
    <property type="protein sequence ID" value="BAA91908.1"/>
    <property type="status" value="ALT_SEQ"/>
    <property type="molecule type" value="mRNA"/>
</dbReference>
<dbReference type="EMBL" id="AK297998">
    <property type="protein sequence ID" value="BAG60304.1"/>
    <property type="molecule type" value="mRNA"/>
</dbReference>
<dbReference type="EMBL" id="AC023510">
    <property type="status" value="NOT_ANNOTATED_CDS"/>
    <property type="molecule type" value="Genomic_DNA"/>
</dbReference>
<dbReference type="EMBL" id="AC092794">
    <property type="status" value="NOT_ANNOTATED_CDS"/>
    <property type="molecule type" value="Genomic_DNA"/>
</dbReference>
<dbReference type="EMBL" id="CH471094">
    <property type="protein sequence ID" value="EAW96509.1"/>
    <property type="molecule type" value="Genomic_DNA"/>
</dbReference>
<dbReference type="EMBL" id="BC028415">
    <property type="protein sequence ID" value="AAH28415.1"/>
    <property type="molecule type" value="mRNA"/>
</dbReference>
<dbReference type="EMBL" id="BC047415">
    <property type="protein sequence ID" value="AAH47415.2"/>
    <property type="molecule type" value="mRNA"/>
</dbReference>
<dbReference type="EMBL" id="BC057795">
    <property type="protein sequence ID" value="AAH57795.1"/>
    <property type="molecule type" value="mRNA"/>
</dbReference>
<dbReference type="EMBL" id="BC117281">
    <property type="protein sequence ID" value="AAI17282.2"/>
    <property type="molecule type" value="mRNA"/>
</dbReference>
<dbReference type="EMBL" id="BC117283">
    <property type="protein sequence ID" value="AAI17284.2"/>
    <property type="molecule type" value="mRNA"/>
</dbReference>
<dbReference type="CCDS" id="CCDS41762.1">
    <molecule id="Q6TDU7-1"/>
</dbReference>
<dbReference type="CCDS" id="CCDS41763.1">
    <molecule id="Q6TDU7-3"/>
</dbReference>
<dbReference type="CCDS" id="CCDS55810.1">
    <molecule id="Q6TDU7-2"/>
</dbReference>
<dbReference type="CCDS" id="CCDS55811.1">
    <molecule id="Q6TDU7-4"/>
</dbReference>
<dbReference type="RefSeq" id="NP_001076441.1">
    <molecule id="Q6TDU7-3"/>
    <property type="nucleotide sequence ID" value="NM_001082972.3"/>
</dbReference>
<dbReference type="RefSeq" id="NP_001076442.2">
    <molecule id="Q6TDU7-1"/>
    <property type="nucleotide sequence ID" value="NM_001082973.3"/>
</dbReference>
<dbReference type="RefSeq" id="NP_001191030.2">
    <molecule id="Q6TDU7-4"/>
    <property type="nucleotide sequence ID" value="NM_001204101.3"/>
</dbReference>
<dbReference type="RefSeq" id="NP_001191031.2">
    <molecule id="Q6TDU7-2"/>
    <property type="nucleotide sequence ID" value="NM_001204102.3"/>
</dbReference>
<dbReference type="RefSeq" id="NP_001306906.1">
    <property type="nucleotide sequence ID" value="NM_001319977.1"/>
</dbReference>
<dbReference type="RefSeq" id="NP_001306907.2">
    <molecule id="Q6TDU7-2"/>
    <property type="nucleotide sequence ID" value="NM_001319978.2"/>
</dbReference>
<dbReference type="RefSeq" id="NP_001338990.2">
    <molecule id="Q6TDU7-2"/>
    <property type="nucleotide sequence ID" value="NM_001352061.2"/>
</dbReference>
<dbReference type="RefSeq" id="NP_060742.3">
    <property type="nucleotide sequence ID" value="NM_018272.4"/>
</dbReference>
<dbReference type="RefSeq" id="XP_016875050.1">
    <property type="nucleotide sequence ID" value="XM_017019561.1"/>
</dbReference>
<dbReference type="RefSeq" id="XP_047285030.1">
    <molecule id="Q6TDU7-2"/>
    <property type="nucleotide sequence ID" value="XM_047429074.1"/>
</dbReference>
<dbReference type="PDB" id="8J07">
    <property type="method" value="EM"/>
    <property type="resolution" value="4.10 A"/>
    <property type="chains" value="k3=1-716"/>
</dbReference>
<dbReference type="PDBsum" id="8J07"/>
<dbReference type="EMDB" id="EMD-35888"/>
<dbReference type="SMR" id="Q6TDU7"/>
<dbReference type="BioGRID" id="120550">
    <property type="interactions" value="17"/>
</dbReference>
<dbReference type="FunCoup" id="Q6TDU7">
    <property type="interactions" value="167"/>
</dbReference>
<dbReference type="IntAct" id="Q6TDU7">
    <property type="interactions" value="8"/>
</dbReference>
<dbReference type="STRING" id="9606.ENSP00000379310"/>
<dbReference type="iPTMnet" id="Q6TDU7"/>
<dbReference type="PhosphoSitePlus" id="Q6TDU7"/>
<dbReference type="BioMuta" id="CASC1"/>
<dbReference type="DMDM" id="313104089"/>
<dbReference type="jPOST" id="Q6TDU7"/>
<dbReference type="MassIVE" id="Q6TDU7"/>
<dbReference type="PaxDb" id="9606-ENSP00000379310"/>
<dbReference type="PeptideAtlas" id="Q6TDU7"/>
<dbReference type="ProteomicsDB" id="27287"/>
<dbReference type="ProteomicsDB" id="67386">
    <molecule id="Q6TDU7-1"/>
</dbReference>
<dbReference type="ProteomicsDB" id="67387">
    <molecule id="Q6TDU7-2"/>
</dbReference>
<dbReference type="ProteomicsDB" id="67388">
    <molecule id="Q6TDU7-3"/>
</dbReference>
<dbReference type="Antibodypedia" id="50635">
    <property type="antibodies" value="37 antibodies from 9 providers"/>
</dbReference>
<dbReference type="DNASU" id="55259"/>
<dbReference type="Ensembl" id="ENST00000320267.13">
    <molecule id="Q6TDU7-1"/>
    <property type="protein sequence ID" value="ENSP00000313141.9"/>
    <property type="gene ID" value="ENSG00000118307.20"/>
</dbReference>
<dbReference type="Ensembl" id="ENST00000354189.9">
    <molecule id="Q6TDU7-3"/>
    <property type="protein sequence ID" value="ENSP00000346126.5"/>
    <property type="gene ID" value="ENSG00000118307.20"/>
</dbReference>
<dbReference type="Ensembl" id="ENST00000395990.6">
    <molecule id="Q6TDU7-2"/>
    <property type="protein sequence ID" value="ENSP00000379313.2"/>
    <property type="gene ID" value="ENSG00000118307.20"/>
</dbReference>
<dbReference type="Ensembl" id="ENST00000545133.5">
    <molecule id="Q6TDU7-4"/>
    <property type="protein sequence ID" value="ENSP00000437373.1"/>
    <property type="gene ID" value="ENSG00000118307.20"/>
</dbReference>
<dbReference type="GeneID" id="55259"/>
<dbReference type="KEGG" id="hsa:55259"/>
<dbReference type="UCSC" id="uc001rgj.4">
    <molecule id="Q6TDU7-1"/>
    <property type="organism name" value="human"/>
</dbReference>
<dbReference type="AGR" id="HGNC:29599"/>
<dbReference type="CTD" id="55259"/>
<dbReference type="DisGeNET" id="55259"/>
<dbReference type="GeneCards" id="DNAI7"/>
<dbReference type="HGNC" id="HGNC:29599">
    <property type="gene designation" value="DNAI7"/>
</dbReference>
<dbReference type="HPA" id="ENSG00000118307">
    <property type="expression patterns" value="Tissue enhanced (choroid plexus, fallopian tube, testis)"/>
</dbReference>
<dbReference type="MIM" id="616906">
    <property type="type" value="gene"/>
</dbReference>
<dbReference type="neXtProt" id="NX_Q6TDU7"/>
<dbReference type="OpenTargets" id="ENSG00000118307"/>
<dbReference type="VEuPathDB" id="HostDB:ENSG00000118307"/>
<dbReference type="eggNOG" id="ENOG502QQM9">
    <property type="taxonomic scope" value="Eukaryota"/>
</dbReference>
<dbReference type="GeneTree" id="ENSGT00390000004708"/>
<dbReference type="InParanoid" id="Q6TDU7"/>
<dbReference type="PAN-GO" id="Q6TDU7">
    <property type="GO annotations" value="3 GO annotations based on evolutionary models"/>
</dbReference>
<dbReference type="PhylomeDB" id="Q6TDU7"/>
<dbReference type="PathwayCommons" id="Q6TDU7"/>
<dbReference type="SignaLink" id="Q6TDU7"/>
<dbReference type="BioGRID-ORCS" id="55259">
    <property type="hits" value="14 hits in 1134 CRISPR screens"/>
</dbReference>
<dbReference type="ChiTaRS" id="CASC1">
    <property type="organism name" value="human"/>
</dbReference>
<dbReference type="GenomeRNAi" id="55259"/>
<dbReference type="Pharos" id="Q6TDU7">
    <property type="development level" value="Tdark"/>
</dbReference>
<dbReference type="PRO" id="PR:Q6TDU7"/>
<dbReference type="Proteomes" id="UP000005640">
    <property type="component" value="Chromosome 12"/>
</dbReference>
<dbReference type="RNAct" id="Q6TDU7">
    <property type="molecule type" value="protein"/>
</dbReference>
<dbReference type="Bgee" id="ENSG00000118307">
    <property type="expression patterns" value="Expressed in sperm and 122 other cell types or tissues"/>
</dbReference>
<dbReference type="ExpressionAtlas" id="Q6TDU7">
    <property type="expression patterns" value="baseline and differential"/>
</dbReference>
<dbReference type="GO" id="GO:0005858">
    <property type="term" value="C:axonemal dynein complex"/>
    <property type="evidence" value="ECO:0000250"/>
    <property type="project" value="UniProtKB"/>
</dbReference>
<dbReference type="GO" id="GO:0005930">
    <property type="term" value="C:axoneme"/>
    <property type="evidence" value="ECO:0000318"/>
    <property type="project" value="GO_Central"/>
</dbReference>
<dbReference type="GO" id="GO:0005929">
    <property type="term" value="C:cilium"/>
    <property type="evidence" value="ECO:0000250"/>
    <property type="project" value="UniProtKB"/>
</dbReference>
<dbReference type="GO" id="GO:0048487">
    <property type="term" value="F:beta-tubulin binding"/>
    <property type="evidence" value="ECO:0000250"/>
    <property type="project" value="UniProtKB"/>
</dbReference>
<dbReference type="GO" id="GO:0008017">
    <property type="term" value="F:microtubule binding"/>
    <property type="evidence" value="ECO:0000250"/>
    <property type="project" value="UniProtKB"/>
</dbReference>
<dbReference type="InterPro" id="IPR022110">
    <property type="entry name" value="CASC1_C"/>
</dbReference>
<dbReference type="InterPro" id="IPR031826">
    <property type="entry name" value="IC97/Casc1_N"/>
</dbReference>
<dbReference type="InterPro" id="IPR023247">
    <property type="entry name" value="IC97/Dnai7-like"/>
</dbReference>
<dbReference type="PANTHER" id="PTHR20929:SF11">
    <property type="entry name" value="DYNEIN AXONEMAL INTERMEDIATE CHAIN 7"/>
    <property type="match status" value="1"/>
</dbReference>
<dbReference type="PANTHER" id="PTHR20929">
    <property type="entry name" value="LUNG ADENOMA SUSCEPTIBILITY 1-RELATED"/>
    <property type="match status" value="1"/>
</dbReference>
<dbReference type="Pfam" id="PF12366">
    <property type="entry name" value="Casc1_C"/>
    <property type="match status" value="1"/>
</dbReference>
<dbReference type="Pfam" id="PF15927">
    <property type="entry name" value="Casc1_N"/>
    <property type="match status" value="1"/>
</dbReference>
<dbReference type="PRINTS" id="PR02043">
    <property type="entry name" value="CANCERSCCP1"/>
</dbReference>
<protein>
    <recommendedName>
        <fullName evidence="9">Dynein axonemal intermediate chain 7</fullName>
    </recommendedName>
    <alternativeName>
        <fullName>Cancer susceptibility candidate gene 1 protein</fullName>
        <shortName>Protein CASC1</shortName>
    </alternativeName>
    <alternativeName>
        <fullName evidence="10">Cilia and flagella associated protein 94</fullName>
    </alternativeName>
    <alternativeName>
        <fullName>Lung adenoma susceptibility 1-like protein</fullName>
    </alternativeName>
    <alternativeName>
        <fullName>Protein phosphatase 1 regulatory subunit 54</fullName>
    </alternativeName>
</protein>
<gene>
    <name evidence="10" type="primary">DNAI7</name>
    <name type="synonym">CASC1</name>
    <name evidence="10" type="synonym">CFAP94</name>
    <name type="synonym">LAS1</name>
    <name type="synonym">PPP1R54</name>
</gene>
<sequence length="716" mass="83160">MSGSKKKKVTKAERLKLLQEEEERRLKEEEEARLKYEKEEMERLEIQRIEKEKWHRLEAKDLERRNEELEELYLLERCFPEAEKLKQETKLLSQWKHYIQCDGSPDPSVAQEMNTFISLWKEKTNETFEEVIEKSKVVLNLIEKLKFILLETPPCDLQDKNIIQYQESILQLQELLHLKFGVATEILLKQASTLADLDSGNMEKVIKDENVTLYVWANLKKNPRHRSVRFSETQIGFEIPRILATSDIAVRLLHTHYDHVSALHPVSTPSKEYTSAVTELVKDDVKNVEKAISKEVEEESKQQERGSHLIQEEEIKVEEEQGDIEVKMSSAEEESEAIKCEREMKVLSETVSAAQLLLVENSSEKPDFFEDNVVDLCQFTTLGGVYHLDILELPPQCKPVKGWMIVEILKEGLQKYTYPPETTEEFETENAFPPIEVTLEVHENVIFFEDPVVVRWDAEGKHWRTDGISNVSYKPKERLVTFSLDTFGPVTLIQDAHINMPYQSWELRPLDVNKVLLTVTTVFTEIQIQIKENLCMLSSIKLKDKKHISILEGTWMTPIPFIIALKEAGLNIFPTRHSHFYVIINNKVPLVEVKAYRQMALLSSAFAFGWSKWNLLCNSTKVVFKVREHLTEACTENPNWALLMFSGDRAQRLKIKEESEAFSEALKEETEFHSTLYHMVKDFASEEAMEKVRSSNCQFVNSVCHMLLSTRLLSYS</sequence>
<accession>Q6TDU7</accession>
<accession>B4DNP2</accession>
<accession>F5H6T6</accession>
<accession>Q17RL2</accession>
<accession>Q4G171</accession>
<accession>Q5U5K5</accession>
<accession>Q9NV50</accession>
<reference key="1">
    <citation type="journal article" date="2003" name="Proc. Natl. Acad. Sci. U.S.A.">
        <title>Positional cloning of the major quantitative trait locus underlying lung tumor susceptibility in mice.</title>
        <authorList>
            <person name="Zhang Z."/>
            <person name="Futamura M."/>
            <person name="Vikis H.G."/>
            <person name="Wang M."/>
            <person name="Li J."/>
            <person name="Wang Y."/>
            <person name="Guan K.-L."/>
            <person name="You M."/>
        </authorList>
    </citation>
    <scope>NUCLEOTIDE SEQUENCE [MRNA] (ISOFORM 1)</scope>
    <scope>VARIANT GLU-633</scope>
</reference>
<reference key="2">
    <citation type="journal article" date="2004" name="Nat. Genet.">
        <title>Complete sequencing and characterization of 21,243 full-length human cDNAs.</title>
        <authorList>
            <person name="Ota T."/>
            <person name="Suzuki Y."/>
            <person name="Nishikawa T."/>
            <person name="Otsuki T."/>
            <person name="Sugiyama T."/>
            <person name="Irie R."/>
            <person name="Wakamatsu A."/>
            <person name="Hayashi K."/>
            <person name="Sato H."/>
            <person name="Nagai K."/>
            <person name="Kimura K."/>
            <person name="Makita H."/>
            <person name="Sekine M."/>
            <person name="Obayashi M."/>
            <person name="Nishi T."/>
            <person name="Shibahara T."/>
            <person name="Tanaka T."/>
            <person name="Ishii S."/>
            <person name="Yamamoto J."/>
            <person name="Saito K."/>
            <person name="Kawai Y."/>
            <person name="Isono Y."/>
            <person name="Nakamura Y."/>
            <person name="Nagahari K."/>
            <person name="Murakami K."/>
            <person name="Yasuda T."/>
            <person name="Iwayanagi T."/>
            <person name="Wagatsuma M."/>
            <person name="Shiratori A."/>
            <person name="Sudo H."/>
            <person name="Hosoiri T."/>
            <person name="Kaku Y."/>
            <person name="Kodaira H."/>
            <person name="Kondo H."/>
            <person name="Sugawara M."/>
            <person name="Takahashi M."/>
            <person name="Kanda K."/>
            <person name="Yokoi T."/>
            <person name="Furuya T."/>
            <person name="Kikkawa E."/>
            <person name="Omura Y."/>
            <person name="Abe K."/>
            <person name="Kamihara K."/>
            <person name="Katsuta N."/>
            <person name="Sato K."/>
            <person name="Tanikawa M."/>
            <person name="Yamazaki M."/>
            <person name="Ninomiya K."/>
            <person name="Ishibashi T."/>
            <person name="Yamashita H."/>
            <person name="Murakawa K."/>
            <person name="Fujimori K."/>
            <person name="Tanai H."/>
            <person name="Kimata M."/>
            <person name="Watanabe M."/>
            <person name="Hiraoka S."/>
            <person name="Chiba Y."/>
            <person name="Ishida S."/>
            <person name="Ono Y."/>
            <person name="Takiguchi S."/>
            <person name="Watanabe S."/>
            <person name="Yosida M."/>
            <person name="Hotuta T."/>
            <person name="Kusano J."/>
            <person name="Kanehori K."/>
            <person name="Takahashi-Fujii A."/>
            <person name="Hara H."/>
            <person name="Tanase T.-O."/>
            <person name="Nomura Y."/>
            <person name="Togiya S."/>
            <person name="Komai F."/>
            <person name="Hara R."/>
            <person name="Takeuchi K."/>
            <person name="Arita M."/>
            <person name="Imose N."/>
            <person name="Musashino K."/>
            <person name="Yuuki H."/>
            <person name="Oshima A."/>
            <person name="Sasaki N."/>
            <person name="Aotsuka S."/>
            <person name="Yoshikawa Y."/>
            <person name="Matsunawa H."/>
            <person name="Ichihara T."/>
            <person name="Shiohata N."/>
            <person name="Sano S."/>
            <person name="Moriya S."/>
            <person name="Momiyama H."/>
            <person name="Satoh N."/>
            <person name="Takami S."/>
            <person name="Terashima Y."/>
            <person name="Suzuki O."/>
            <person name="Nakagawa S."/>
            <person name="Senoh A."/>
            <person name="Mizoguchi H."/>
            <person name="Goto Y."/>
            <person name="Shimizu F."/>
            <person name="Wakebe H."/>
            <person name="Hishigaki H."/>
            <person name="Watanabe T."/>
            <person name="Sugiyama A."/>
            <person name="Takemoto M."/>
            <person name="Kawakami B."/>
            <person name="Yamazaki M."/>
            <person name="Watanabe K."/>
            <person name="Kumagai A."/>
            <person name="Itakura S."/>
            <person name="Fukuzumi Y."/>
            <person name="Fujimori Y."/>
            <person name="Komiyama M."/>
            <person name="Tashiro H."/>
            <person name="Tanigami A."/>
            <person name="Fujiwara T."/>
            <person name="Ono T."/>
            <person name="Yamada K."/>
            <person name="Fujii Y."/>
            <person name="Ozaki K."/>
            <person name="Hirao M."/>
            <person name="Ohmori Y."/>
            <person name="Kawabata A."/>
            <person name="Hikiji T."/>
            <person name="Kobatake N."/>
            <person name="Inagaki H."/>
            <person name="Ikema Y."/>
            <person name="Okamoto S."/>
            <person name="Okitani R."/>
            <person name="Kawakami T."/>
            <person name="Noguchi S."/>
            <person name="Itoh T."/>
            <person name="Shigeta K."/>
            <person name="Senba T."/>
            <person name="Matsumura K."/>
            <person name="Nakajima Y."/>
            <person name="Mizuno T."/>
            <person name="Morinaga M."/>
            <person name="Sasaki M."/>
            <person name="Togashi T."/>
            <person name="Oyama M."/>
            <person name="Hata H."/>
            <person name="Watanabe M."/>
            <person name="Komatsu T."/>
            <person name="Mizushima-Sugano J."/>
            <person name="Satoh T."/>
            <person name="Shirai Y."/>
            <person name="Takahashi Y."/>
            <person name="Nakagawa K."/>
            <person name="Okumura K."/>
            <person name="Nagase T."/>
            <person name="Nomura N."/>
            <person name="Kikuchi H."/>
            <person name="Masuho Y."/>
            <person name="Yamashita R."/>
            <person name="Nakai K."/>
            <person name="Yada T."/>
            <person name="Nakamura Y."/>
            <person name="Ohara O."/>
            <person name="Isogai T."/>
            <person name="Sugano S."/>
        </authorList>
    </citation>
    <scope>NUCLEOTIDE SEQUENCE [LARGE SCALE MRNA] (ISOFORM 4)</scope>
    <scope>NUCLEOTIDE SEQUENCE [LARGE SCALE MRNA] OF 166-716 (ISOFORM 1)</scope>
    <scope>VARIANT GLU-633</scope>
    <source>
        <tissue>Lung</tissue>
        <tissue>Ovarian carcinoma</tissue>
    </source>
</reference>
<reference key="3">
    <citation type="journal article" date="2006" name="Nature">
        <title>The finished DNA sequence of human chromosome 12.</title>
        <authorList>
            <person name="Scherer S.E."/>
            <person name="Muzny D.M."/>
            <person name="Buhay C.J."/>
            <person name="Chen R."/>
            <person name="Cree A."/>
            <person name="Ding Y."/>
            <person name="Dugan-Rocha S."/>
            <person name="Gill R."/>
            <person name="Gunaratne P."/>
            <person name="Harris R.A."/>
            <person name="Hawes A.C."/>
            <person name="Hernandez J."/>
            <person name="Hodgson A.V."/>
            <person name="Hume J."/>
            <person name="Jackson A."/>
            <person name="Khan Z.M."/>
            <person name="Kovar-Smith C."/>
            <person name="Lewis L.R."/>
            <person name="Lozado R.J."/>
            <person name="Metzker M.L."/>
            <person name="Milosavljevic A."/>
            <person name="Miner G.R."/>
            <person name="Montgomery K.T."/>
            <person name="Morgan M.B."/>
            <person name="Nazareth L.V."/>
            <person name="Scott G."/>
            <person name="Sodergren E."/>
            <person name="Song X.-Z."/>
            <person name="Steffen D."/>
            <person name="Lovering R.C."/>
            <person name="Wheeler D.A."/>
            <person name="Worley K.C."/>
            <person name="Yuan Y."/>
            <person name="Zhang Z."/>
            <person name="Adams C.Q."/>
            <person name="Ansari-Lari M.A."/>
            <person name="Ayele M."/>
            <person name="Brown M.J."/>
            <person name="Chen G."/>
            <person name="Chen Z."/>
            <person name="Clerc-Blankenburg K.P."/>
            <person name="Davis C."/>
            <person name="Delgado O."/>
            <person name="Dinh H.H."/>
            <person name="Draper H."/>
            <person name="Gonzalez-Garay M.L."/>
            <person name="Havlak P."/>
            <person name="Jackson L.R."/>
            <person name="Jacob L.S."/>
            <person name="Kelly S.H."/>
            <person name="Li L."/>
            <person name="Li Z."/>
            <person name="Liu J."/>
            <person name="Liu W."/>
            <person name="Lu J."/>
            <person name="Maheshwari M."/>
            <person name="Nguyen B.-V."/>
            <person name="Okwuonu G.O."/>
            <person name="Pasternak S."/>
            <person name="Perez L.M."/>
            <person name="Plopper F.J.H."/>
            <person name="Santibanez J."/>
            <person name="Shen H."/>
            <person name="Tabor P.E."/>
            <person name="Verduzco D."/>
            <person name="Waldron L."/>
            <person name="Wang Q."/>
            <person name="Williams G.A."/>
            <person name="Zhang J."/>
            <person name="Zhou J."/>
            <person name="Allen C.C."/>
            <person name="Amin A.G."/>
            <person name="Anyalebechi V."/>
            <person name="Bailey M."/>
            <person name="Barbaria J.A."/>
            <person name="Bimage K.E."/>
            <person name="Bryant N.P."/>
            <person name="Burch P.E."/>
            <person name="Burkett C.E."/>
            <person name="Burrell K.L."/>
            <person name="Calderon E."/>
            <person name="Cardenas V."/>
            <person name="Carter K."/>
            <person name="Casias K."/>
            <person name="Cavazos I."/>
            <person name="Cavazos S.R."/>
            <person name="Ceasar H."/>
            <person name="Chacko J."/>
            <person name="Chan S.N."/>
            <person name="Chavez D."/>
            <person name="Christopoulos C."/>
            <person name="Chu J."/>
            <person name="Cockrell R."/>
            <person name="Cox C.D."/>
            <person name="Dang M."/>
            <person name="Dathorne S.R."/>
            <person name="David R."/>
            <person name="Davis C.M."/>
            <person name="Davy-Carroll L."/>
            <person name="Deshazo D.R."/>
            <person name="Donlin J.E."/>
            <person name="D'Souza L."/>
            <person name="Eaves K.A."/>
            <person name="Egan A."/>
            <person name="Emery-Cohen A.J."/>
            <person name="Escotto M."/>
            <person name="Flagg N."/>
            <person name="Forbes L.D."/>
            <person name="Gabisi A.M."/>
            <person name="Garza M."/>
            <person name="Hamilton C."/>
            <person name="Henderson N."/>
            <person name="Hernandez O."/>
            <person name="Hines S."/>
            <person name="Hogues M.E."/>
            <person name="Huang M."/>
            <person name="Idlebird D.G."/>
            <person name="Johnson R."/>
            <person name="Jolivet A."/>
            <person name="Jones S."/>
            <person name="Kagan R."/>
            <person name="King L.M."/>
            <person name="Leal B."/>
            <person name="Lebow H."/>
            <person name="Lee S."/>
            <person name="LeVan J.M."/>
            <person name="Lewis L.C."/>
            <person name="London P."/>
            <person name="Lorensuhewa L.M."/>
            <person name="Loulseged H."/>
            <person name="Lovett D.A."/>
            <person name="Lucier A."/>
            <person name="Lucier R.L."/>
            <person name="Ma J."/>
            <person name="Madu R.C."/>
            <person name="Mapua P."/>
            <person name="Martindale A.D."/>
            <person name="Martinez E."/>
            <person name="Massey E."/>
            <person name="Mawhiney S."/>
            <person name="Meador M.G."/>
            <person name="Mendez S."/>
            <person name="Mercado C."/>
            <person name="Mercado I.C."/>
            <person name="Merritt C.E."/>
            <person name="Miner Z.L."/>
            <person name="Minja E."/>
            <person name="Mitchell T."/>
            <person name="Mohabbat F."/>
            <person name="Mohabbat K."/>
            <person name="Montgomery B."/>
            <person name="Moore N."/>
            <person name="Morris S."/>
            <person name="Munidasa M."/>
            <person name="Ngo R.N."/>
            <person name="Nguyen N.B."/>
            <person name="Nickerson E."/>
            <person name="Nwaokelemeh O.O."/>
            <person name="Nwokenkwo S."/>
            <person name="Obregon M."/>
            <person name="Oguh M."/>
            <person name="Oragunye N."/>
            <person name="Oviedo R.J."/>
            <person name="Parish B.J."/>
            <person name="Parker D.N."/>
            <person name="Parrish J."/>
            <person name="Parks K.L."/>
            <person name="Paul H.A."/>
            <person name="Payton B.A."/>
            <person name="Perez A."/>
            <person name="Perrin W."/>
            <person name="Pickens A."/>
            <person name="Primus E.L."/>
            <person name="Pu L.-L."/>
            <person name="Puazo M."/>
            <person name="Quiles M.M."/>
            <person name="Quiroz J.B."/>
            <person name="Rabata D."/>
            <person name="Reeves K."/>
            <person name="Ruiz S.J."/>
            <person name="Shao H."/>
            <person name="Sisson I."/>
            <person name="Sonaike T."/>
            <person name="Sorelle R.P."/>
            <person name="Sutton A.E."/>
            <person name="Svatek A.F."/>
            <person name="Svetz L.A."/>
            <person name="Tamerisa K.S."/>
            <person name="Taylor T.R."/>
            <person name="Teague B."/>
            <person name="Thomas N."/>
            <person name="Thorn R.D."/>
            <person name="Trejos Z.Y."/>
            <person name="Trevino B.K."/>
            <person name="Ukegbu O.N."/>
            <person name="Urban J.B."/>
            <person name="Vasquez L.I."/>
            <person name="Vera V.A."/>
            <person name="Villasana D.M."/>
            <person name="Wang L."/>
            <person name="Ward-Moore S."/>
            <person name="Warren J.T."/>
            <person name="Wei X."/>
            <person name="White F."/>
            <person name="Williamson A.L."/>
            <person name="Wleczyk R."/>
            <person name="Wooden H.S."/>
            <person name="Wooden S.H."/>
            <person name="Yen J."/>
            <person name="Yoon L."/>
            <person name="Yoon V."/>
            <person name="Zorrilla S.E."/>
            <person name="Nelson D."/>
            <person name="Kucherlapati R."/>
            <person name="Weinstock G."/>
            <person name="Gibbs R.A."/>
        </authorList>
    </citation>
    <scope>NUCLEOTIDE SEQUENCE [LARGE SCALE GENOMIC DNA]</scope>
</reference>
<reference key="4">
    <citation type="submission" date="2005-07" db="EMBL/GenBank/DDBJ databases">
        <authorList>
            <person name="Mural R.J."/>
            <person name="Istrail S."/>
            <person name="Sutton G.G."/>
            <person name="Florea L."/>
            <person name="Halpern A.L."/>
            <person name="Mobarry C.M."/>
            <person name="Lippert R."/>
            <person name="Walenz B."/>
            <person name="Shatkay H."/>
            <person name="Dew I."/>
            <person name="Miller J.R."/>
            <person name="Flanigan M.J."/>
            <person name="Edwards N.J."/>
            <person name="Bolanos R."/>
            <person name="Fasulo D."/>
            <person name="Halldorsson B.V."/>
            <person name="Hannenhalli S."/>
            <person name="Turner R."/>
            <person name="Yooseph S."/>
            <person name="Lu F."/>
            <person name="Nusskern D.R."/>
            <person name="Shue B.C."/>
            <person name="Zheng X.H."/>
            <person name="Zhong F."/>
            <person name="Delcher A.L."/>
            <person name="Huson D.H."/>
            <person name="Kravitz S.A."/>
            <person name="Mouchard L."/>
            <person name="Reinert K."/>
            <person name="Remington K.A."/>
            <person name="Clark A.G."/>
            <person name="Waterman M.S."/>
            <person name="Eichler E.E."/>
            <person name="Adams M.D."/>
            <person name="Hunkapiller M.W."/>
            <person name="Myers E.W."/>
            <person name="Venter J.C."/>
        </authorList>
    </citation>
    <scope>NUCLEOTIDE SEQUENCE [LARGE SCALE GENOMIC DNA]</scope>
    <scope>VARIANT GLU-633</scope>
    <source>
        <tissue>Testis</tissue>
    </source>
</reference>
<reference key="5">
    <citation type="journal article" date="2004" name="Genome Res.">
        <title>The status, quality, and expansion of the NIH full-length cDNA project: the Mammalian Gene Collection (MGC).</title>
        <authorList>
            <consortium name="The MGC Project Team"/>
        </authorList>
    </citation>
    <scope>NUCLEOTIDE SEQUENCE [LARGE SCALE MRNA] (ISOFORMS 1; 2 AND 3)</scope>
    <scope>VARIANT GLU-633</scope>
    <source>
        <tissue>Colon</tissue>
        <tissue>Testis</tissue>
    </source>
</reference>
<reference key="6">
    <citation type="journal article" date="2006" name="Carcinogenesis">
        <title>A V141L polymorphism of the human LRMP gene is associated with survival of lung cancer patients.</title>
        <authorList>
            <person name="Manenti G."/>
            <person name="Galbiati F."/>
            <person name="Pettinicchio A."/>
            <person name="Spinola M."/>
            <person name="Piconese S."/>
            <person name="Leoni V.P."/>
            <person name="Conti B."/>
            <person name="Ravagnani F."/>
            <person name="Incarbone M."/>
            <person name="Pastorino U."/>
            <person name="Dragani T.A."/>
        </authorList>
    </citation>
    <scope>VARIANT SER-33</scope>
</reference>